<dbReference type="EC" id="5.2.1.8" evidence="1"/>
<dbReference type="EMBL" id="AM743169">
    <property type="protein sequence ID" value="CAQ44552.1"/>
    <property type="molecule type" value="Genomic_DNA"/>
</dbReference>
<dbReference type="RefSeq" id="WP_012479267.1">
    <property type="nucleotide sequence ID" value="NC_010943.1"/>
</dbReference>
<dbReference type="SMR" id="B2FQR1"/>
<dbReference type="EnsemblBacteria" id="CAQ44552">
    <property type="protein sequence ID" value="CAQ44552"/>
    <property type="gene ID" value="Smlt0988"/>
</dbReference>
<dbReference type="KEGG" id="sml:Smlt0988"/>
<dbReference type="PATRIC" id="fig|522373.3.peg.954"/>
<dbReference type="eggNOG" id="COG0544">
    <property type="taxonomic scope" value="Bacteria"/>
</dbReference>
<dbReference type="HOGENOM" id="CLU_033058_2_0_6"/>
<dbReference type="Proteomes" id="UP000008840">
    <property type="component" value="Chromosome"/>
</dbReference>
<dbReference type="GO" id="GO:0005737">
    <property type="term" value="C:cytoplasm"/>
    <property type="evidence" value="ECO:0007669"/>
    <property type="project" value="UniProtKB-SubCell"/>
</dbReference>
<dbReference type="GO" id="GO:0003755">
    <property type="term" value="F:peptidyl-prolyl cis-trans isomerase activity"/>
    <property type="evidence" value="ECO:0007669"/>
    <property type="project" value="UniProtKB-UniRule"/>
</dbReference>
<dbReference type="GO" id="GO:0044183">
    <property type="term" value="F:protein folding chaperone"/>
    <property type="evidence" value="ECO:0007669"/>
    <property type="project" value="TreeGrafter"/>
</dbReference>
<dbReference type="GO" id="GO:0043022">
    <property type="term" value="F:ribosome binding"/>
    <property type="evidence" value="ECO:0007669"/>
    <property type="project" value="TreeGrafter"/>
</dbReference>
<dbReference type="GO" id="GO:0051083">
    <property type="term" value="P:'de novo' cotranslational protein folding"/>
    <property type="evidence" value="ECO:0007669"/>
    <property type="project" value="TreeGrafter"/>
</dbReference>
<dbReference type="GO" id="GO:0051301">
    <property type="term" value="P:cell division"/>
    <property type="evidence" value="ECO:0007669"/>
    <property type="project" value="UniProtKB-KW"/>
</dbReference>
<dbReference type="GO" id="GO:0061077">
    <property type="term" value="P:chaperone-mediated protein folding"/>
    <property type="evidence" value="ECO:0007669"/>
    <property type="project" value="TreeGrafter"/>
</dbReference>
<dbReference type="GO" id="GO:0015031">
    <property type="term" value="P:protein transport"/>
    <property type="evidence" value="ECO:0007669"/>
    <property type="project" value="UniProtKB-UniRule"/>
</dbReference>
<dbReference type="GO" id="GO:0043335">
    <property type="term" value="P:protein unfolding"/>
    <property type="evidence" value="ECO:0007669"/>
    <property type="project" value="TreeGrafter"/>
</dbReference>
<dbReference type="Gene3D" id="3.10.50.40">
    <property type="match status" value="1"/>
</dbReference>
<dbReference type="Gene3D" id="3.30.70.1050">
    <property type="entry name" value="Trigger factor ribosome-binding domain"/>
    <property type="match status" value="1"/>
</dbReference>
<dbReference type="Gene3D" id="1.10.3120.10">
    <property type="entry name" value="Trigger factor, C-terminal domain"/>
    <property type="match status" value="1"/>
</dbReference>
<dbReference type="HAMAP" id="MF_00303">
    <property type="entry name" value="Trigger_factor_Tig"/>
    <property type="match status" value="1"/>
</dbReference>
<dbReference type="InterPro" id="IPR046357">
    <property type="entry name" value="PPIase_dom_sf"/>
</dbReference>
<dbReference type="InterPro" id="IPR005215">
    <property type="entry name" value="Trig_fac"/>
</dbReference>
<dbReference type="InterPro" id="IPR008880">
    <property type="entry name" value="Trigger_fac_C"/>
</dbReference>
<dbReference type="InterPro" id="IPR037041">
    <property type="entry name" value="Trigger_fac_C_sf"/>
</dbReference>
<dbReference type="InterPro" id="IPR008881">
    <property type="entry name" value="Trigger_fac_ribosome-bd_bac"/>
</dbReference>
<dbReference type="InterPro" id="IPR036611">
    <property type="entry name" value="Trigger_fac_ribosome-bd_sf"/>
</dbReference>
<dbReference type="InterPro" id="IPR027304">
    <property type="entry name" value="Trigger_fact/SurA_dom_sf"/>
</dbReference>
<dbReference type="NCBIfam" id="TIGR00115">
    <property type="entry name" value="tig"/>
    <property type="match status" value="1"/>
</dbReference>
<dbReference type="PANTHER" id="PTHR30560">
    <property type="entry name" value="TRIGGER FACTOR CHAPERONE AND PEPTIDYL-PROLYL CIS/TRANS ISOMERASE"/>
    <property type="match status" value="1"/>
</dbReference>
<dbReference type="PANTHER" id="PTHR30560:SF3">
    <property type="entry name" value="TRIGGER FACTOR-LIKE PROTEIN TIG, CHLOROPLASTIC"/>
    <property type="match status" value="1"/>
</dbReference>
<dbReference type="Pfam" id="PF05698">
    <property type="entry name" value="Trigger_C"/>
    <property type="match status" value="1"/>
</dbReference>
<dbReference type="Pfam" id="PF05697">
    <property type="entry name" value="Trigger_N"/>
    <property type="match status" value="1"/>
</dbReference>
<dbReference type="PIRSF" id="PIRSF003095">
    <property type="entry name" value="Trigger_factor"/>
    <property type="match status" value="1"/>
</dbReference>
<dbReference type="SUPFAM" id="SSF54534">
    <property type="entry name" value="FKBP-like"/>
    <property type="match status" value="1"/>
</dbReference>
<dbReference type="SUPFAM" id="SSF109998">
    <property type="entry name" value="Triger factor/SurA peptide-binding domain-like"/>
    <property type="match status" value="1"/>
</dbReference>
<dbReference type="SUPFAM" id="SSF102735">
    <property type="entry name" value="Trigger factor ribosome-binding domain"/>
    <property type="match status" value="1"/>
</dbReference>
<comment type="function">
    <text evidence="1">Involved in protein export. Acts as a chaperone by maintaining the newly synthesized protein in an open conformation. Functions as a peptidyl-prolyl cis-trans isomerase.</text>
</comment>
<comment type="catalytic activity">
    <reaction evidence="1">
        <text>[protein]-peptidylproline (omega=180) = [protein]-peptidylproline (omega=0)</text>
        <dbReference type="Rhea" id="RHEA:16237"/>
        <dbReference type="Rhea" id="RHEA-COMP:10747"/>
        <dbReference type="Rhea" id="RHEA-COMP:10748"/>
        <dbReference type="ChEBI" id="CHEBI:83833"/>
        <dbReference type="ChEBI" id="CHEBI:83834"/>
        <dbReference type="EC" id="5.2.1.8"/>
    </reaction>
</comment>
<comment type="subcellular location">
    <subcellularLocation>
        <location>Cytoplasm</location>
    </subcellularLocation>
    <text evidence="1">About half TF is bound to the ribosome near the polypeptide exit tunnel while the other half is free in the cytoplasm.</text>
</comment>
<comment type="domain">
    <text evidence="1">Consists of 3 domains; the N-terminus binds the ribosome, the middle domain has PPIase activity, while the C-terminus has intrinsic chaperone activity on its own.</text>
</comment>
<comment type="similarity">
    <text evidence="1">Belongs to the FKBP-type PPIase family. Tig subfamily.</text>
</comment>
<proteinExistence type="inferred from homology"/>
<organism>
    <name type="scientific">Stenotrophomonas maltophilia (strain K279a)</name>
    <dbReference type="NCBI Taxonomy" id="522373"/>
    <lineage>
        <taxon>Bacteria</taxon>
        <taxon>Pseudomonadati</taxon>
        <taxon>Pseudomonadota</taxon>
        <taxon>Gammaproteobacteria</taxon>
        <taxon>Lysobacterales</taxon>
        <taxon>Lysobacteraceae</taxon>
        <taxon>Stenotrophomonas</taxon>
        <taxon>Stenotrophomonas maltophilia group</taxon>
    </lineage>
</organism>
<feature type="chain" id="PRO_1000115586" description="Trigger factor">
    <location>
        <begin position="1"/>
        <end position="431"/>
    </location>
</feature>
<feature type="domain" description="PPIase FKBP-type" evidence="1">
    <location>
        <begin position="158"/>
        <end position="243"/>
    </location>
</feature>
<protein>
    <recommendedName>
        <fullName evidence="1">Trigger factor</fullName>
        <shortName evidence="1">TF</shortName>
        <ecNumber evidence="1">5.2.1.8</ecNumber>
    </recommendedName>
    <alternativeName>
        <fullName evidence="1">PPIase</fullName>
    </alternativeName>
</protein>
<accession>B2FQR1</accession>
<evidence type="ECO:0000255" key="1">
    <source>
        <dbReference type="HAMAP-Rule" id="MF_00303"/>
    </source>
</evidence>
<keyword id="KW-0131">Cell cycle</keyword>
<keyword id="KW-0132">Cell division</keyword>
<keyword id="KW-0143">Chaperone</keyword>
<keyword id="KW-0963">Cytoplasm</keyword>
<keyword id="KW-0413">Isomerase</keyword>
<keyword id="KW-1185">Reference proteome</keyword>
<keyword id="KW-0697">Rotamase</keyword>
<name>TIG_STRMK</name>
<gene>
    <name evidence="1" type="primary">tig</name>
    <name type="ordered locus">Smlt0988</name>
</gene>
<reference key="1">
    <citation type="journal article" date="2008" name="Genome Biol.">
        <title>The complete genome, comparative and functional analysis of Stenotrophomonas maltophilia reveals an organism heavily shielded by drug resistance determinants.</title>
        <authorList>
            <person name="Crossman L.C."/>
            <person name="Gould V.C."/>
            <person name="Dow J.M."/>
            <person name="Vernikos G.S."/>
            <person name="Okazaki A."/>
            <person name="Sebaihia M."/>
            <person name="Saunders D."/>
            <person name="Arrowsmith C."/>
            <person name="Carver T."/>
            <person name="Peters N."/>
            <person name="Adlem E."/>
            <person name="Kerhornou A."/>
            <person name="Lord A."/>
            <person name="Murphy L."/>
            <person name="Seeger K."/>
            <person name="Squares R."/>
            <person name="Rutter S."/>
            <person name="Quail M.A."/>
            <person name="Rajandream M.A."/>
            <person name="Harris D."/>
            <person name="Churcher C."/>
            <person name="Bentley S.D."/>
            <person name="Parkhill J."/>
            <person name="Thomson N.R."/>
            <person name="Avison M.B."/>
        </authorList>
    </citation>
    <scope>NUCLEOTIDE SEQUENCE [LARGE SCALE GENOMIC DNA]</scope>
    <source>
        <strain>K279a</strain>
    </source>
</reference>
<sequence>MQASIESTGNLERRLSFSLPEDRLQSHIVGRLGEIARTTRIKGFRPGKVPAKVIEQRFGAQVRGEALDGLLRETFDAAVREHDLRIVGSPRIDKGDEGEFSFVATVEVVPDFGDIDVSKLTVVRHTAEITDADIDQMIENLQNQRRTWAPVSRGAQDGDLVAVETWSQAGEERLPAEGTEKGSIVLGQGMMFETIEKGLVGLAKGEEKTLDVEFPADWRVPVLAGKTVQVTVKVAEVSEPVVPAVDEAFIKSFGVKGGDVEQFRSDIRANLERELKGALMNRLRREVGEQLIAAYSSVEMPPRLVENEARAMLAQQVEQIRRNGQSVGEIPADAHEGFKEAAAKRVLVGLLVGEVARINDLRLEAKRLNETMRLIASTYEEPEQVIEMYRNDPQLMSGLQNRVMEEQVIDWIAERAQHTEEKLSFQDAIRQ</sequence>